<keyword id="KW-0963">Cytoplasm</keyword>
<keyword id="KW-0210">Decarboxylase</keyword>
<keyword id="KW-0456">Lyase</keyword>
<keyword id="KW-0627">Porphyrin biosynthesis</keyword>
<gene>
    <name evidence="1" type="primary">hemE</name>
    <name type="ordered locus">Tery_1714</name>
</gene>
<comment type="function">
    <text evidence="1">Catalyzes the decarboxylation of four acetate groups of uroporphyrinogen-III to yield coproporphyrinogen-III.</text>
</comment>
<comment type="catalytic activity">
    <reaction evidence="1">
        <text>uroporphyrinogen III + 4 H(+) = coproporphyrinogen III + 4 CO2</text>
        <dbReference type="Rhea" id="RHEA:19865"/>
        <dbReference type="ChEBI" id="CHEBI:15378"/>
        <dbReference type="ChEBI" id="CHEBI:16526"/>
        <dbReference type="ChEBI" id="CHEBI:57308"/>
        <dbReference type="ChEBI" id="CHEBI:57309"/>
        <dbReference type="EC" id="4.1.1.37"/>
    </reaction>
</comment>
<comment type="pathway">
    <text evidence="1">Porphyrin-containing compound metabolism; protoporphyrin-IX biosynthesis; coproporphyrinogen-III from 5-aminolevulinate: step 4/4.</text>
</comment>
<comment type="subunit">
    <text evidence="1">Homodimer.</text>
</comment>
<comment type="subcellular location">
    <subcellularLocation>
        <location evidence="1">Cytoplasm</location>
    </subcellularLocation>
</comment>
<comment type="similarity">
    <text evidence="1">Belongs to the uroporphyrinogen decarboxylase family.</text>
</comment>
<name>DCUP_TRIEI</name>
<accession>Q114U6</accession>
<organism>
    <name type="scientific">Trichodesmium erythraeum (strain IMS101)</name>
    <dbReference type="NCBI Taxonomy" id="203124"/>
    <lineage>
        <taxon>Bacteria</taxon>
        <taxon>Bacillati</taxon>
        <taxon>Cyanobacteriota</taxon>
        <taxon>Cyanophyceae</taxon>
        <taxon>Oscillatoriophycideae</taxon>
        <taxon>Oscillatoriales</taxon>
        <taxon>Microcoleaceae</taxon>
        <taxon>Trichodesmium</taxon>
    </lineage>
</organism>
<sequence length="354" mass="39918">MAQLSQVPYLLRATRGELLDRPPVWMMRQAGRYMKAYRDLREKYPSFRERSENTDIAVEISLQPFHAFKPDGVILFSDILTPLPAIGIDFDIIESKGPIIDPPIRTEAQIDKLHPIEPEESLPFIREILQTLRREVKNEAAVLGFIGAPWTLAAYAIEGKSCKDYTNIKKMAFCQPEMLHKFLGKLAEAIAVYARYQINSGAQVIQMFDSWAGQLSPQDYETFALPYQKLVVQEVKKTHPNTPFILYINGSAGLLERMPQTGVDIVSVDWSVDIAEARQRLGNNICVQGNIDPGVLFGSQEFIKSRILETIRKAGNRGHILNLGHGVLKETPEENVEFFFKTAKEISSLLALTA</sequence>
<protein>
    <recommendedName>
        <fullName evidence="1">Uroporphyrinogen decarboxylase</fullName>
        <shortName evidence="1">UPD</shortName>
        <shortName evidence="1">URO-D</shortName>
        <ecNumber evidence="1">4.1.1.37</ecNumber>
    </recommendedName>
</protein>
<dbReference type="EC" id="4.1.1.37" evidence="1"/>
<dbReference type="EMBL" id="CP000393">
    <property type="protein sequence ID" value="ABG50978.1"/>
    <property type="molecule type" value="Genomic_DNA"/>
</dbReference>
<dbReference type="RefSeq" id="WP_011611353.1">
    <property type="nucleotide sequence ID" value="NC_008312.1"/>
</dbReference>
<dbReference type="SMR" id="Q114U6"/>
<dbReference type="STRING" id="203124.Tery_1714"/>
<dbReference type="KEGG" id="ter:Tery_1714"/>
<dbReference type="eggNOG" id="COG0407">
    <property type="taxonomic scope" value="Bacteria"/>
</dbReference>
<dbReference type="HOGENOM" id="CLU_040933_0_2_3"/>
<dbReference type="OrthoDB" id="9806656at2"/>
<dbReference type="UniPathway" id="UPA00251">
    <property type="reaction ID" value="UER00321"/>
</dbReference>
<dbReference type="GO" id="GO:0005737">
    <property type="term" value="C:cytoplasm"/>
    <property type="evidence" value="ECO:0007669"/>
    <property type="project" value="UniProtKB-SubCell"/>
</dbReference>
<dbReference type="GO" id="GO:0004853">
    <property type="term" value="F:uroporphyrinogen decarboxylase activity"/>
    <property type="evidence" value="ECO:0007669"/>
    <property type="project" value="UniProtKB-UniRule"/>
</dbReference>
<dbReference type="GO" id="GO:0006782">
    <property type="term" value="P:protoporphyrinogen IX biosynthetic process"/>
    <property type="evidence" value="ECO:0007669"/>
    <property type="project" value="UniProtKB-UniRule"/>
</dbReference>
<dbReference type="CDD" id="cd00717">
    <property type="entry name" value="URO-D"/>
    <property type="match status" value="1"/>
</dbReference>
<dbReference type="FunFam" id="3.20.20.210:FF:000006">
    <property type="entry name" value="Uroporphyrinogen decarboxylase"/>
    <property type="match status" value="1"/>
</dbReference>
<dbReference type="Gene3D" id="3.20.20.210">
    <property type="match status" value="1"/>
</dbReference>
<dbReference type="HAMAP" id="MF_00218">
    <property type="entry name" value="URO_D"/>
    <property type="match status" value="1"/>
</dbReference>
<dbReference type="InterPro" id="IPR038071">
    <property type="entry name" value="UROD/MetE-like_sf"/>
</dbReference>
<dbReference type="InterPro" id="IPR006361">
    <property type="entry name" value="Uroporphyrinogen_deCO2ase_HemE"/>
</dbReference>
<dbReference type="InterPro" id="IPR000257">
    <property type="entry name" value="Uroporphyrinogen_deCOase"/>
</dbReference>
<dbReference type="NCBIfam" id="TIGR01464">
    <property type="entry name" value="hemE"/>
    <property type="match status" value="1"/>
</dbReference>
<dbReference type="PANTHER" id="PTHR21091">
    <property type="entry name" value="METHYLTETRAHYDROFOLATE:HOMOCYSTEINE METHYLTRANSFERASE RELATED"/>
    <property type="match status" value="1"/>
</dbReference>
<dbReference type="PANTHER" id="PTHR21091:SF169">
    <property type="entry name" value="UROPORPHYRINOGEN DECARBOXYLASE"/>
    <property type="match status" value="1"/>
</dbReference>
<dbReference type="Pfam" id="PF01208">
    <property type="entry name" value="URO-D"/>
    <property type="match status" value="1"/>
</dbReference>
<dbReference type="SUPFAM" id="SSF51726">
    <property type="entry name" value="UROD/MetE-like"/>
    <property type="match status" value="1"/>
</dbReference>
<dbReference type="PROSITE" id="PS00906">
    <property type="entry name" value="UROD_1"/>
    <property type="match status" value="1"/>
</dbReference>
<evidence type="ECO:0000255" key="1">
    <source>
        <dbReference type="HAMAP-Rule" id="MF_00218"/>
    </source>
</evidence>
<proteinExistence type="inferred from homology"/>
<reference key="1">
    <citation type="journal article" date="2015" name="Proc. Natl. Acad. Sci. U.S.A.">
        <title>Trichodesmium genome maintains abundant, widespread noncoding DNA in situ, despite oligotrophic lifestyle.</title>
        <authorList>
            <person name="Walworth N."/>
            <person name="Pfreundt U."/>
            <person name="Nelson W.C."/>
            <person name="Mincer T."/>
            <person name="Heidelberg J.F."/>
            <person name="Fu F."/>
            <person name="Waterbury J.B."/>
            <person name="Glavina del Rio T."/>
            <person name="Goodwin L."/>
            <person name="Kyrpides N.C."/>
            <person name="Land M.L."/>
            <person name="Woyke T."/>
            <person name="Hutchins D.A."/>
            <person name="Hess W.R."/>
            <person name="Webb E.A."/>
        </authorList>
    </citation>
    <scope>NUCLEOTIDE SEQUENCE [LARGE SCALE GENOMIC DNA]</scope>
    <source>
        <strain>IMS101</strain>
    </source>
</reference>
<feature type="chain" id="PRO_0000325706" description="Uroporphyrinogen decarboxylase">
    <location>
        <begin position="1"/>
        <end position="354"/>
    </location>
</feature>
<feature type="binding site" evidence="1">
    <location>
        <begin position="28"/>
        <end position="32"/>
    </location>
    <ligand>
        <name>substrate</name>
    </ligand>
</feature>
<feature type="binding site" evidence="1">
    <location>
        <position position="78"/>
    </location>
    <ligand>
        <name>substrate</name>
    </ligand>
</feature>
<feature type="binding site" evidence="1">
    <location>
        <position position="155"/>
    </location>
    <ligand>
        <name>substrate</name>
    </ligand>
</feature>
<feature type="binding site" evidence="1">
    <location>
        <position position="210"/>
    </location>
    <ligand>
        <name>substrate</name>
    </ligand>
</feature>
<feature type="binding site" evidence="1">
    <location>
        <position position="325"/>
    </location>
    <ligand>
        <name>substrate</name>
    </ligand>
</feature>
<feature type="site" description="Transition state stabilizer" evidence="1">
    <location>
        <position position="78"/>
    </location>
</feature>